<sequence length="404" mass="44575">MKLPIYLDYSATTPVDPRVAQKMSECLLVDGNFGNPASRSHVFGWKAEESVENARRQVADLVNADPREIVWTSGATESDNLAIKGVAHFYHTKGKHLITSKIEHKAVLDTMRQLEREGFEVTYIEPGEDGLITPAMVEAALRDDTILVSIMHVNNEIGTINDIAAIGELTRSKGVLFHVDGAQSTGKVDIDLQALKVDLMSFSAHKTYGPKGIGALYVSRKPRVRLEATMHGGGHERGMRSGTLATHQIVGMGEAFHVAKEDMAAENLRIKALSDRFYKQVEHLEELYINGSMTARVPHNLNLSFNYVEGESLIMALKDLAVSSGSACTSASLEPSYVLRALGRNDELAHSSIRFTFGRFTTEEEIDYAAQKVCEAVTKLRALSPLWDMYKDGVDISKIEWAAH</sequence>
<feature type="chain" id="PRO_1000019425" description="Cysteine desulfurase IscS">
    <location>
        <begin position="1"/>
        <end position="404"/>
    </location>
</feature>
<feature type="active site" description="Cysteine persulfide intermediate" evidence="1">
    <location>
        <position position="328"/>
    </location>
</feature>
<feature type="binding site" evidence="1">
    <location>
        <begin position="75"/>
        <end position="76"/>
    </location>
    <ligand>
        <name>pyridoxal 5'-phosphate</name>
        <dbReference type="ChEBI" id="CHEBI:597326"/>
    </ligand>
</feature>
<feature type="binding site" evidence="1">
    <location>
        <position position="155"/>
    </location>
    <ligand>
        <name>pyridoxal 5'-phosphate</name>
        <dbReference type="ChEBI" id="CHEBI:597326"/>
    </ligand>
</feature>
<feature type="binding site" evidence="1">
    <location>
        <position position="183"/>
    </location>
    <ligand>
        <name>pyridoxal 5'-phosphate</name>
        <dbReference type="ChEBI" id="CHEBI:597326"/>
    </ligand>
</feature>
<feature type="binding site" evidence="1">
    <location>
        <begin position="203"/>
        <end position="205"/>
    </location>
    <ligand>
        <name>pyridoxal 5'-phosphate</name>
        <dbReference type="ChEBI" id="CHEBI:597326"/>
    </ligand>
</feature>
<feature type="binding site" evidence="1">
    <location>
        <position position="243"/>
    </location>
    <ligand>
        <name>pyridoxal 5'-phosphate</name>
        <dbReference type="ChEBI" id="CHEBI:597326"/>
    </ligand>
</feature>
<feature type="binding site" description="via persulfide group" evidence="1">
    <location>
        <position position="328"/>
    </location>
    <ligand>
        <name>[2Fe-2S] cluster</name>
        <dbReference type="ChEBI" id="CHEBI:190135"/>
        <note>ligand shared with IscU</note>
    </ligand>
</feature>
<feature type="modified residue" description="N6-(pyridoxal phosphate)lysine" evidence="1">
    <location>
        <position position="206"/>
    </location>
</feature>
<protein>
    <recommendedName>
        <fullName evidence="1">Cysteine desulfurase IscS</fullName>
        <ecNumber evidence="1">2.8.1.7</ecNumber>
    </recommendedName>
</protein>
<proteinExistence type="inferred from homology"/>
<keyword id="KW-0001">2Fe-2S</keyword>
<keyword id="KW-0963">Cytoplasm</keyword>
<keyword id="KW-0408">Iron</keyword>
<keyword id="KW-0411">Iron-sulfur</keyword>
<keyword id="KW-0479">Metal-binding</keyword>
<keyword id="KW-0663">Pyridoxal phosphate</keyword>
<keyword id="KW-0808">Transferase</keyword>
<evidence type="ECO:0000255" key="1">
    <source>
        <dbReference type="HAMAP-Rule" id="MF_00331"/>
    </source>
</evidence>
<name>ISCS_PSEF5</name>
<organism>
    <name type="scientific">Pseudomonas fluorescens (strain ATCC BAA-477 / NRRL B-23932 / Pf-5)</name>
    <dbReference type="NCBI Taxonomy" id="220664"/>
    <lineage>
        <taxon>Bacteria</taxon>
        <taxon>Pseudomonadati</taxon>
        <taxon>Pseudomonadota</taxon>
        <taxon>Gammaproteobacteria</taxon>
        <taxon>Pseudomonadales</taxon>
        <taxon>Pseudomonadaceae</taxon>
        <taxon>Pseudomonas</taxon>
    </lineage>
</organism>
<comment type="function">
    <text evidence="1">Master enzyme that delivers sulfur to a number of partners involved in Fe-S cluster assembly, tRNA modification or cofactor biosynthesis. Catalyzes the removal of elemental sulfur atoms from cysteine to produce alanine. Functions as a sulfur delivery protein for Fe-S cluster synthesis onto IscU, an Fe-S scaffold assembly protein, as well as other S acceptor proteins.</text>
</comment>
<comment type="catalytic activity">
    <reaction evidence="1">
        <text>(sulfur carrier)-H + L-cysteine = (sulfur carrier)-SH + L-alanine</text>
        <dbReference type="Rhea" id="RHEA:43892"/>
        <dbReference type="Rhea" id="RHEA-COMP:14737"/>
        <dbReference type="Rhea" id="RHEA-COMP:14739"/>
        <dbReference type="ChEBI" id="CHEBI:29917"/>
        <dbReference type="ChEBI" id="CHEBI:35235"/>
        <dbReference type="ChEBI" id="CHEBI:57972"/>
        <dbReference type="ChEBI" id="CHEBI:64428"/>
        <dbReference type="EC" id="2.8.1.7"/>
    </reaction>
</comment>
<comment type="cofactor">
    <cofactor evidence="1">
        <name>pyridoxal 5'-phosphate</name>
        <dbReference type="ChEBI" id="CHEBI:597326"/>
    </cofactor>
</comment>
<comment type="pathway">
    <text evidence="1">Cofactor biosynthesis; iron-sulfur cluster biosynthesis.</text>
</comment>
<comment type="subunit">
    <text evidence="1">Homodimer. Forms a heterotetramer with IscU, interacts with other sulfur acceptors.</text>
</comment>
<comment type="subcellular location">
    <subcellularLocation>
        <location evidence="1">Cytoplasm</location>
    </subcellularLocation>
</comment>
<comment type="similarity">
    <text evidence="1">Belongs to the class-V pyridoxal-phosphate-dependent aminotransferase family. NifS/IscS subfamily.</text>
</comment>
<accession>Q4K6T8</accession>
<reference key="1">
    <citation type="journal article" date="2005" name="Nat. Biotechnol.">
        <title>Complete genome sequence of the plant commensal Pseudomonas fluorescens Pf-5.</title>
        <authorList>
            <person name="Paulsen I.T."/>
            <person name="Press C.M."/>
            <person name="Ravel J."/>
            <person name="Kobayashi D.Y."/>
            <person name="Myers G.S.A."/>
            <person name="Mavrodi D.V."/>
            <person name="DeBoy R.T."/>
            <person name="Seshadri R."/>
            <person name="Ren Q."/>
            <person name="Madupu R."/>
            <person name="Dodson R.J."/>
            <person name="Durkin A.S."/>
            <person name="Brinkac L.M."/>
            <person name="Daugherty S.C."/>
            <person name="Sullivan S.A."/>
            <person name="Rosovitz M.J."/>
            <person name="Gwinn M.L."/>
            <person name="Zhou L."/>
            <person name="Schneider D.J."/>
            <person name="Cartinhour S.W."/>
            <person name="Nelson W.C."/>
            <person name="Weidman J."/>
            <person name="Watkins K."/>
            <person name="Tran K."/>
            <person name="Khouri H."/>
            <person name="Pierson E.A."/>
            <person name="Pierson L.S. III"/>
            <person name="Thomashow L.S."/>
            <person name="Loper J.E."/>
        </authorList>
    </citation>
    <scope>NUCLEOTIDE SEQUENCE [LARGE SCALE GENOMIC DNA]</scope>
    <source>
        <strain>ATCC BAA-477 / NRRL B-23932 / Pf-5</strain>
    </source>
</reference>
<dbReference type="EC" id="2.8.1.7" evidence="1"/>
<dbReference type="EMBL" id="CP000076">
    <property type="protein sequence ID" value="AAY94194.1"/>
    <property type="molecule type" value="Genomic_DNA"/>
</dbReference>
<dbReference type="RefSeq" id="WP_011063216.1">
    <property type="nucleotide sequence ID" value="NC_004129.6"/>
</dbReference>
<dbReference type="SMR" id="Q4K6T8"/>
<dbReference type="STRING" id="220664.PFL_4965"/>
<dbReference type="KEGG" id="pfl:PFL_4965"/>
<dbReference type="PATRIC" id="fig|220664.5.peg.5087"/>
<dbReference type="eggNOG" id="COG1104">
    <property type="taxonomic scope" value="Bacteria"/>
</dbReference>
<dbReference type="HOGENOM" id="CLU_003433_0_2_6"/>
<dbReference type="UniPathway" id="UPA00266"/>
<dbReference type="Proteomes" id="UP000008540">
    <property type="component" value="Chromosome"/>
</dbReference>
<dbReference type="GO" id="GO:1990221">
    <property type="term" value="C:L-cysteine desulfurase complex"/>
    <property type="evidence" value="ECO:0007669"/>
    <property type="project" value="UniProtKB-ARBA"/>
</dbReference>
<dbReference type="GO" id="GO:0051537">
    <property type="term" value="F:2 iron, 2 sulfur cluster binding"/>
    <property type="evidence" value="ECO:0007669"/>
    <property type="project" value="UniProtKB-UniRule"/>
</dbReference>
<dbReference type="GO" id="GO:0031071">
    <property type="term" value="F:cysteine desulfurase activity"/>
    <property type="evidence" value="ECO:0007669"/>
    <property type="project" value="UniProtKB-UniRule"/>
</dbReference>
<dbReference type="GO" id="GO:0046872">
    <property type="term" value="F:metal ion binding"/>
    <property type="evidence" value="ECO:0007669"/>
    <property type="project" value="UniProtKB-KW"/>
</dbReference>
<dbReference type="GO" id="GO:0030170">
    <property type="term" value="F:pyridoxal phosphate binding"/>
    <property type="evidence" value="ECO:0007669"/>
    <property type="project" value="UniProtKB-UniRule"/>
</dbReference>
<dbReference type="GO" id="GO:0044571">
    <property type="term" value="P:[2Fe-2S] cluster assembly"/>
    <property type="evidence" value="ECO:0007669"/>
    <property type="project" value="UniProtKB-UniRule"/>
</dbReference>
<dbReference type="FunFam" id="3.40.640.10:FF:000003">
    <property type="entry name" value="Cysteine desulfurase IscS"/>
    <property type="match status" value="1"/>
</dbReference>
<dbReference type="FunFam" id="3.90.1150.10:FF:000002">
    <property type="entry name" value="Cysteine desulfurase IscS"/>
    <property type="match status" value="1"/>
</dbReference>
<dbReference type="Gene3D" id="3.90.1150.10">
    <property type="entry name" value="Aspartate Aminotransferase, domain 1"/>
    <property type="match status" value="1"/>
</dbReference>
<dbReference type="Gene3D" id="3.40.640.10">
    <property type="entry name" value="Type I PLP-dependent aspartate aminotransferase-like (Major domain)"/>
    <property type="match status" value="1"/>
</dbReference>
<dbReference type="HAMAP" id="MF_00331">
    <property type="entry name" value="Cys_desulf_IscS"/>
    <property type="match status" value="1"/>
</dbReference>
<dbReference type="InterPro" id="IPR000192">
    <property type="entry name" value="Aminotrans_V_dom"/>
</dbReference>
<dbReference type="InterPro" id="IPR020578">
    <property type="entry name" value="Aminotrans_V_PyrdxlP_BS"/>
</dbReference>
<dbReference type="InterPro" id="IPR010240">
    <property type="entry name" value="Cys_deSase_IscS"/>
</dbReference>
<dbReference type="InterPro" id="IPR016454">
    <property type="entry name" value="Cysteine_dSase"/>
</dbReference>
<dbReference type="InterPro" id="IPR015424">
    <property type="entry name" value="PyrdxlP-dep_Trfase"/>
</dbReference>
<dbReference type="InterPro" id="IPR015421">
    <property type="entry name" value="PyrdxlP-dep_Trfase_major"/>
</dbReference>
<dbReference type="InterPro" id="IPR015422">
    <property type="entry name" value="PyrdxlP-dep_Trfase_small"/>
</dbReference>
<dbReference type="NCBIfam" id="TIGR02006">
    <property type="entry name" value="IscS"/>
    <property type="match status" value="1"/>
</dbReference>
<dbReference type="NCBIfam" id="NF010611">
    <property type="entry name" value="PRK14012.1"/>
    <property type="match status" value="1"/>
</dbReference>
<dbReference type="PANTHER" id="PTHR11601:SF34">
    <property type="entry name" value="CYSTEINE DESULFURASE"/>
    <property type="match status" value="1"/>
</dbReference>
<dbReference type="PANTHER" id="PTHR11601">
    <property type="entry name" value="CYSTEINE DESULFURYLASE FAMILY MEMBER"/>
    <property type="match status" value="1"/>
</dbReference>
<dbReference type="Pfam" id="PF00266">
    <property type="entry name" value="Aminotran_5"/>
    <property type="match status" value="1"/>
</dbReference>
<dbReference type="PIRSF" id="PIRSF005572">
    <property type="entry name" value="NifS"/>
    <property type="match status" value="1"/>
</dbReference>
<dbReference type="SUPFAM" id="SSF53383">
    <property type="entry name" value="PLP-dependent transferases"/>
    <property type="match status" value="1"/>
</dbReference>
<dbReference type="PROSITE" id="PS00595">
    <property type="entry name" value="AA_TRANSFER_CLASS_5"/>
    <property type="match status" value="1"/>
</dbReference>
<gene>
    <name evidence="1" type="primary">iscS</name>
    <name type="ordered locus">PFL_4965</name>
</gene>